<protein>
    <recommendedName>
        <fullName evidence="1">Small ribosomal subunit protein bS18B</fullName>
    </recommendedName>
    <alternativeName>
        <fullName evidence="3">30S ribosomal protein S18 2</fullName>
    </alternativeName>
</protein>
<gene>
    <name evidence="1" type="primary">rpsR2</name>
    <name type="ordered locus">SCO3425</name>
    <name type="ORF">SCE9.32c</name>
</gene>
<organism>
    <name type="scientific">Streptomyces coelicolor (strain ATCC BAA-471 / A3(2) / M145)</name>
    <dbReference type="NCBI Taxonomy" id="100226"/>
    <lineage>
        <taxon>Bacteria</taxon>
        <taxon>Bacillati</taxon>
        <taxon>Actinomycetota</taxon>
        <taxon>Actinomycetes</taxon>
        <taxon>Kitasatosporales</taxon>
        <taxon>Streptomycetaceae</taxon>
        <taxon>Streptomyces</taxon>
        <taxon>Streptomyces albidoflavus group</taxon>
    </lineage>
</organism>
<dbReference type="EMBL" id="AL939116">
    <property type="protein sequence ID" value="CAB42778.1"/>
    <property type="molecule type" value="Genomic_DNA"/>
</dbReference>
<dbReference type="PIR" id="T36351">
    <property type="entry name" value="T36351"/>
</dbReference>
<dbReference type="RefSeq" id="NP_627631.1">
    <property type="nucleotide sequence ID" value="NC_003888.3"/>
</dbReference>
<dbReference type="SMR" id="Q9X8K4"/>
<dbReference type="FunCoup" id="Q9X8K4">
    <property type="interactions" value="201"/>
</dbReference>
<dbReference type="STRING" id="100226.gene:17761047"/>
<dbReference type="PaxDb" id="100226-SCO3425"/>
<dbReference type="KEGG" id="sco:SCO3425"/>
<dbReference type="PATRIC" id="fig|100226.15.peg.3487"/>
<dbReference type="eggNOG" id="COG0238">
    <property type="taxonomic scope" value="Bacteria"/>
</dbReference>
<dbReference type="HOGENOM" id="CLU_148710_1_0_11"/>
<dbReference type="InParanoid" id="Q9X8K4"/>
<dbReference type="OrthoDB" id="9812008at2"/>
<dbReference type="PhylomeDB" id="Q9X8K4"/>
<dbReference type="Proteomes" id="UP000001973">
    <property type="component" value="Chromosome"/>
</dbReference>
<dbReference type="GO" id="GO:0022627">
    <property type="term" value="C:cytosolic small ribosomal subunit"/>
    <property type="evidence" value="ECO:0000318"/>
    <property type="project" value="GO_Central"/>
</dbReference>
<dbReference type="GO" id="GO:0070181">
    <property type="term" value="F:small ribosomal subunit rRNA binding"/>
    <property type="evidence" value="ECO:0000318"/>
    <property type="project" value="GO_Central"/>
</dbReference>
<dbReference type="GO" id="GO:0003735">
    <property type="term" value="F:structural constituent of ribosome"/>
    <property type="evidence" value="ECO:0000318"/>
    <property type="project" value="GO_Central"/>
</dbReference>
<dbReference type="GO" id="GO:0006412">
    <property type="term" value="P:translation"/>
    <property type="evidence" value="ECO:0000318"/>
    <property type="project" value="GO_Central"/>
</dbReference>
<dbReference type="FunFam" id="4.10.640.10:FF:000016">
    <property type="entry name" value="30S ribosomal protein S18"/>
    <property type="match status" value="1"/>
</dbReference>
<dbReference type="Gene3D" id="4.10.640.10">
    <property type="entry name" value="Ribosomal protein S18"/>
    <property type="match status" value="1"/>
</dbReference>
<dbReference type="HAMAP" id="MF_00270">
    <property type="entry name" value="Ribosomal_bS18"/>
    <property type="match status" value="1"/>
</dbReference>
<dbReference type="InterPro" id="IPR001648">
    <property type="entry name" value="Ribosomal_bS18"/>
</dbReference>
<dbReference type="InterPro" id="IPR018275">
    <property type="entry name" value="Ribosomal_bS18_CS"/>
</dbReference>
<dbReference type="InterPro" id="IPR036870">
    <property type="entry name" value="Ribosomal_bS18_sf"/>
</dbReference>
<dbReference type="NCBIfam" id="TIGR00165">
    <property type="entry name" value="S18"/>
    <property type="match status" value="1"/>
</dbReference>
<dbReference type="PANTHER" id="PTHR13479">
    <property type="entry name" value="30S RIBOSOMAL PROTEIN S18"/>
    <property type="match status" value="1"/>
</dbReference>
<dbReference type="PANTHER" id="PTHR13479:SF40">
    <property type="entry name" value="SMALL RIBOSOMAL SUBUNIT PROTEIN BS18M"/>
    <property type="match status" value="1"/>
</dbReference>
<dbReference type="Pfam" id="PF01084">
    <property type="entry name" value="Ribosomal_S18"/>
    <property type="match status" value="1"/>
</dbReference>
<dbReference type="PRINTS" id="PR00974">
    <property type="entry name" value="RIBOSOMALS18"/>
</dbReference>
<dbReference type="SUPFAM" id="SSF46911">
    <property type="entry name" value="Ribosomal protein S18"/>
    <property type="match status" value="1"/>
</dbReference>
<dbReference type="PROSITE" id="PS00057">
    <property type="entry name" value="RIBOSOMAL_S18"/>
    <property type="match status" value="1"/>
</dbReference>
<feature type="chain" id="PRO_0000111237" description="Small ribosomal subunit protein bS18B">
    <location>
        <begin position="1"/>
        <end position="79"/>
    </location>
</feature>
<feature type="region of interest" description="Disordered" evidence="2">
    <location>
        <begin position="1"/>
        <end position="24"/>
    </location>
</feature>
<feature type="compositionally biased region" description="Basic and acidic residues" evidence="2">
    <location>
        <begin position="1"/>
        <end position="11"/>
    </location>
</feature>
<evidence type="ECO:0000255" key="1">
    <source>
        <dbReference type="HAMAP-Rule" id="MF_00270"/>
    </source>
</evidence>
<evidence type="ECO:0000256" key="2">
    <source>
        <dbReference type="SAM" id="MobiDB-lite"/>
    </source>
</evidence>
<evidence type="ECO:0000305" key="3"/>
<comment type="function">
    <text evidence="1">Binds as a heterodimer with protein bS6 to the central domain of the 16S rRNA, where it helps stabilize the platform of the 30S subunit.</text>
</comment>
<comment type="subunit">
    <text evidence="1">Part of the 30S ribosomal subunit. Forms a tight heterodimer with protein bS6.</text>
</comment>
<comment type="similarity">
    <text evidence="1">Belongs to the bacterial ribosomal protein bS18 family.</text>
</comment>
<sequence length="79" mass="9324">MPRPRKADRTPARQRPNPLDRDGVTYVDYKDTELLRKFVSDRGKIRSRRVTRVTSQQQRQLARAIKNAREMALLPYGTR</sequence>
<accession>Q9X8K4</accession>
<name>RS182_STRCO</name>
<proteinExistence type="inferred from homology"/>
<reference key="1">
    <citation type="journal article" date="2002" name="Nature">
        <title>Complete genome sequence of the model actinomycete Streptomyces coelicolor A3(2).</title>
        <authorList>
            <person name="Bentley S.D."/>
            <person name="Chater K.F."/>
            <person name="Cerdeno-Tarraga A.-M."/>
            <person name="Challis G.L."/>
            <person name="Thomson N.R."/>
            <person name="James K.D."/>
            <person name="Harris D.E."/>
            <person name="Quail M.A."/>
            <person name="Kieser H."/>
            <person name="Harper D."/>
            <person name="Bateman A."/>
            <person name="Brown S."/>
            <person name="Chandra G."/>
            <person name="Chen C.W."/>
            <person name="Collins M."/>
            <person name="Cronin A."/>
            <person name="Fraser A."/>
            <person name="Goble A."/>
            <person name="Hidalgo J."/>
            <person name="Hornsby T."/>
            <person name="Howarth S."/>
            <person name="Huang C.-H."/>
            <person name="Kieser T."/>
            <person name="Larke L."/>
            <person name="Murphy L.D."/>
            <person name="Oliver K."/>
            <person name="O'Neil S."/>
            <person name="Rabbinowitsch E."/>
            <person name="Rajandream M.A."/>
            <person name="Rutherford K.M."/>
            <person name="Rutter S."/>
            <person name="Seeger K."/>
            <person name="Saunders D."/>
            <person name="Sharp S."/>
            <person name="Squares R."/>
            <person name="Squares S."/>
            <person name="Taylor K."/>
            <person name="Warren T."/>
            <person name="Wietzorrek A."/>
            <person name="Woodward J.R."/>
            <person name="Barrell B.G."/>
            <person name="Parkhill J."/>
            <person name="Hopwood D.A."/>
        </authorList>
    </citation>
    <scope>NUCLEOTIDE SEQUENCE [LARGE SCALE GENOMIC DNA]</scope>
    <source>
        <strain>ATCC BAA-471 / A3(2) / M145</strain>
    </source>
</reference>
<keyword id="KW-1185">Reference proteome</keyword>
<keyword id="KW-0687">Ribonucleoprotein</keyword>
<keyword id="KW-0689">Ribosomal protein</keyword>
<keyword id="KW-0694">RNA-binding</keyword>
<keyword id="KW-0699">rRNA-binding</keyword>